<protein>
    <recommendedName>
        <fullName>Hemerythrin-like protein</fullName>
    </recommendedName>
</protein>
<reference key="1">
    <citation type="journal article" date="2005" name="Infect. Immun.">
        <title>Expression of the nfa1 gene cloned from pathogenic Naegleria fowleri in nonpathogenic N. gruberi enhances cytotoxicity against CHO target cells in vitro.</title>
        <authorList>
            <person name="Jeong S.-R."/>
            <person name="Lee S.-C."/>
            <person name="Song K.-J."/>
            <person name="Park S."/>
            <person name="Kim K."/>
            <person name="Kwon M.-H."/>
            <person name="Im K."/>
            <person name="Shin H.-J."/>
        </authorList>
    </citation>
    <scope>NUCLEOTIDE SEQUENCE [GENOMIC DNA]</scope>
    <source>
        <strain>Singh</strain>
    </source>
</reference>
<gene>
    <name type="primary">nfa1</name>
</gene>
<sequence length="119" mass="13403">MATTIPSPFNWDSSFCVGNNELNEQHKKLFALINALDANRSSASALKELLDFVVMHFKAEEDLFAKVNFSDSTSHKETHDKFVQDALGLKTVGDAEIQFIKQWLVNHIKGSDMKYKGVL</sequence>
<organism>
    <name type="scientific">Naegleria gruberi</name>
    <name type="common">Amoeba</name>
    <dbReference type="NCBI Taxonomy" id="5762"/>
    <lineage>
        <taxon>Eukaryota</taxon>
        <taxon>Discoba</taxon>
        <taxon>Heterolobosea</taxon>
        <taxon>Tetramitia</taxon>
        <taxon>Eutetramitia</taxon>
        <taxon>Vahlkampfiidae</taxon>
        <taxon>Naegleria</taxon>
    </lineage>
</organism>
<dbReference type="EMBL" id="AY701742">
    <property type="protein sequence ID" value="AAT92053.1"/>
    <property type="molecule type" value="Genomic_DNA"/>
</dbReference>
<dbReference type="SMR" id="Q6B0K8"/>
<dbReference type="VEuPathDB" id="AmoebaDB:NAEGRDRAFT_36233"/>
<dbReference type="GO" id="GO:0005506">
    <property type="term" value="F:iron ion binding"/>
    <property type="evidence" value="ECO:0007669"/>
    <property type="project" value="InterPro"/>
</dbReference>
<dbReference type="GO" id="GO:0005344">
    <property type="term" value="F:oxygen carrier activity"/>
    <property type="evidence" value="ECO:0007669"/>
    <property type="project" value="UniProtKB-KW"/>
</dbReference>
<dbReference type="CDD" id="cd12107">
    <property type="entry name" value="Hemerythrin"/>
    <property type="match status" value="1"/>
</dbReference>
<dbReference type="Gene3D" id="1.20.120.50">
    <property type="entry name" value="Hemerythrin-like"/>
    <property type="match status" value="1"/>
</dbReference>
<dbReference type="InterPro" id="IPR002063">
    <property type="entry name" value="Haemerythrin"/>
</dbReference>
<dbReference type="InterPro" id="IPR016131">
    <property type="entry name" value="Haemerythrin_Fe_BS"/>
</dbReference>
<dbReference type="InterPro" id="IPR050669">
    <property type="entry name" value="Hemerythrin"/>
</dbReference>
<dbReference type="InterPro" id="IPR012312">
    <property type="entry name" value="Hemerythrin-like"/>
</dbReference>
<dbReference type="InterPro" id="IPR035938">
    <property type="entry name" value="Hemerythrin-like_sf"/>
</dbReference>
<dbReference type="InterPro" id="IPR012827">
    <property type="entry name" value="Hemerythrin_metal-bd"/>
</dbReference>
<dbReference type="NCBIfam" id="NF033749">
    <property type="entry name" value="bact_hemeryth"/>
    <property type="match status" value="1"/>
</dbReference>
<dbReference type="NCBIfam" id="TIGR02481">
    <property type="entry name" value="hemeryth_dom"/>
    <property type="match status" value="1"/>
</dbReference>
<dbReference type="NCBIfam" id="TIGR00058">
    <property type="entry name" value="Hemerythrin"/>
    <property type="match status" value="1"/>
</dbReference>
<dbReference type="PANTHER" id="PTHR37164">
    <property type="entry name" value="BACTERIOHEMERYTHRIN"/>
    <property type="match status" value="1"/>
</dbReference>
<dbReference type="PANTHER" id="PTHR37164:SF1">
    <property type="entry name" value="BACTERIOHEMERYTHRIN"/>
    <property type="match status" value="1"/>
</dbReference>
<dbReference type="Pfam" id="PF01814">
    <property type="entry name" value="Hemerythrin"/>
    <property type="match status" value="1"/>
</dbReference>
<dbReference type="PIRSF" id="PIRSF002033">
    <property type="entry name" value="Hemerythrin"/>
    <property type="match status" value="1"/>
</dbReference>
<dbReference type="PRINTS" id="PR00186">
    <property type="entry name" value="HEMERYTHRIN"/>
</dbReference>
<dbReference type="SUPFAM" id="SSF47188">
    <property type="entry name" value="Hemerythrin-like"/>
    <property type="match status" value="1"/>
</dbReference>
<dbReference type="PROSITE" id="PS00550">
    <property type="entry name" value="HEMERYTHRINS"/>
    <property type="match status" value="1"/>
</dbReference>
<comment type="function">
    <text evidence="1">Oxygen-binding protein. The oxygen-binding site contains two iron atoms (By similarity).</text>
</comment>
<comment type="similarity">
    <text evidence="3">Belongs to the hemerythrin family.</text>
</comment>
<proteinExistence type="inferred from homology"/>
<feature type="chain" id="PRO_0000343360" description="Hemerythrin-like protein">
    <location>
        <begin position="1"/>
        <end position="119"/>
    </location>
</feature>
<feature type="binding site" evidence="2">
    <location>
        <position position="26"/>
    </location>
    <ligand>
        <name>Fe cation</name>
        <dbReference type="ChEBI" id="CHEBI:24875"/>
        <label>1</label>
    </ligand>
</feature>
<feature type="binding site" evidence="2">
    <location>
        <position position="56"/>
    </location>
    <ligand>
        <name>Fe cation</name>
        <dbReference type="ChEBI" id="CHEBI:24875"/>
        <label>1</label>
    </ligand>
</feature>
<feature type="binding site" evidence="2">
    <location>
        <position position="60"/>
    </location>
    <ligand>
        <name>Fe cation</name>
        <dbReference type="ChEBI" id="CHEBI:24875"/>
        <label>1</label>
    </ligand>
</feature>
<feature type="binding site" evidence="2">
    <location>
        <position position="60"/>
    </location>
    <ligand>
        <name>Fe cation</name>
        <dbReference type="ChEBI" id="CHEBI:24875"/>
        <label>2</label>
    </ligand>
</feature>
<feature type="binding site" evidence="2">
    <location>
        <position position="75"/>
    </location>
    <ligand>
        <name>Fe cation</name>
        <dbReference type="ChEBI" id="CHEBI:24875"/>
        <label>2</label>
    </ligand>
</feature>
<feature type="binding site" evidence="2">
    <location>
        <position position="79"/>
    </location>
    <ligand>
        <name>Fe cation</name>
        <dbReference type="ChEBI" id="CHEBI:24875"/>
        <label>2</label>
    </ligand>
</feature>
<feature type="binding site" evidence="2">
    <location>
        <position position="107"/>
    </location>
    <ligand>
        <name>Fe cation</name>
        <dbReference type="ChEBI" id="CHEBI:24875"/>
        <label>2</label>
    </ligand>
</feature>
<feature type="binding site" evidence="2">
    <location>
        <position position="112"/>
    </location>
    <ligand>
        <name>Fe cation</name>
        <dbReference type="ChEBI" id="CHEBI:24875"/>
        <label>1</label>
    </ligand>
</feature>
<feature type="binding site" evidence="2">
    <location>
        <position position="112"/>
    </location>
    <ligand>
        <name>Fe cation</name>
        <dbReference type="ChEBI" id="CHEBI:24875"/>
        <label>2</label>
    </ligand>
</feature>
<keyword id="KW-0408">Iron</keyword>
<keyword id="KW-0479">Metal-binding</keyword>
<keyword id="KW-0561">Oxygen transport</keyword>
<keyword id="KW-0813">Transport</keyword>
<name>HEMTL_NAEGR</name>
<evidence type="ECO:0000250" key="1"/>
<evidence type="ECO:0000250" key="2">
    <source>
        <dbReference type="UniProtKB" id="P02244"/>
    </source>
</evidence>
<evidence type="ECO:0000305" key="3"/>
<accession>Q6B0K8</accession>